<name>ECPA_ECOLI</name>
<protein>
    <recommendedName>
        <fullName>Common pilus major fimbrillin subunit EcpA</fullName>
    </recommendedName>
    <alternativeName>
        <fullName>MatB fimbrillin</fullName>
    </alternativeName>
</protein>
<comment type="function">
    <text evidence="1">Part of the ecpRABCDE operon, which encodes the E.coli common pilus (ECP). ECP is found in both commensal and pathogenic strains and plays a dual role in early-stage biofilm development and host cell recognition. Major subunit of the fimbria (By similarity).</text>
</comment>
<comment type="subunit">
    <text evidence="1">Self-associates. Forms filaments. Interacts with EcpD (By similarity).</text>
</comment>
<comment type="subcellular location">
    <subcellularLocation>
        <location evidence="1">Fimbrium</location>
    </subcellularLocation>
</comment>
<comment type="induction">
    <text evidence="1">Negatively regulated by H-NS. Positively regulated by IHF and EcpR (By similarity).</text>
</comment>
<comment type="miscellaneous">
    <text>Not expressed under classical laboratory conditions, but is functional when constitutively expressed (PubMed:11466275, PubMed:20522494).</text>
</comment>
<comment type="similarity">
    <text evidence="3">Belongs to the EcpA/MatB fimbrillin family.</text>
</comment>
<evidence type="ECO:0000250" key="1"/>
<evidence type="ECO:0000255" key="2"/>
<evidence type="ECO:0000305" key="3"/>
<keyword id="KW-0281">Fimbrium</keyword>
<keyword id="KW-1185">Reference proteome</keyword>
<keyword id="KW-0732">Signal</keyword>
<proteinExistence type="inferred from homology"/>
<feature type="signal peptide" evidence="2">
    <location>
        <begin position="1"/>
        <end position="22"/>
    </location>
</feature>
<feature type="chain" id="PRO_0000013790" description="Common pilus major fimbrillin subunit EcpA">
    <location>
        <begin position="23"/>
        <end position="195"/>
    </location>
</feature>
<reference key="1">
    <citation type="submission" date="1997-01" db="EMBL/GenBank/DDBJ databases">
        <title>Sequence of minutes 4-25 of Escherichia coli.</title>
        <authorList>
            <person name="Chung E."/>
            <person name="Allen E."/>
            <person name="Araujo R."/>
            <person name="Aparicio A.M."/>
            <person name="Davis K."/>
            <person name="Duncan M."/>
            <person name="Federspiel N."/>
            <person name="Hyman R."/>
            <person name="Kalman S."/>
            <person name="Komp C."/>
            <person name="Kurdi O."/>
            <person name="Lew H."/>
            <person name="Lin D."/>
            <person name="Namath A."/>
            <person name="Oefner P."/>
            <person name="Roberts D."/>
            <person name="Schramm S."/>
            <person name="Davis R.W."/>
        </authorList>
    </citation>
    <scope>NUCLEOTIDE SEQUENCE [LARGE SCALE GENOMIC DNA]</scope>
    <source>
        <strain>K12 / MG1655 / ATCC 47076</strain>
    </source>
</reference>
<reference key="2">
    <citation type="journal article" date="1997" name="Science">
        <title>The complete genome sequence of Escherichia coli K-12.</title>
        <authorList>
            <person name="Blattner F.R."/>
            <person name="Plunkett G. III"/>
            <person name="Bloch C.A."/>
            <person name="Perna N.T."/>
            <person name="Burland V."/>
            <person name="Riley M."/>
            <person name="Collado-Vides J."/>
            <person name="Glasner J.D."/>
            <person name="Rode C.K."/>
            <person name="Mayhew G.F."/>
            <person name="Gregor J."/>
            <person name="Davis N.W."/>
            <person name="Kirkpatrick H.A."/>
            <person name="Goeden M.A."/>
            <person name="Rose D.J."/>
            <person name="Mau B."/>
            <person name="Shao Y."/>
        </authorList>
    </citation>
    <scope>NUCLEOTIDE SEQUENCE [LARGE SCALE GENOMIC DNA]</scope>
    <source>
        <strain>K12 / MG1655 / ATCC 47076</strain>
    </source>
</reference>
<reference key="3">
    <citation type="journal article" date="2006" name="Mol. Syst. Biol.">
        <title>Highly accurate genome sequences of Escherichia coli K-12 strains MG1655 and W3110.</title>
        <authorList>
            <person name="Hayashi K."/>
            <person name="Morooka N."/>
            <person name="Yamamoto Y."/>
            <person name="Fujita K."/>
            <person name="Isono K."/>
            <person name="Choi S."/>
            <person name="Ohtsubo E."/>
            <person name="Baba T."/>
            <person name="Wanner B.L."/>
            <person name="Mori H."/>
            <person name="Horiuchi T."/>
        </authorList>
    </citation>
    <scope>NUCLEOTIDE SEQUENCE [LARGE SCALE GENOMIC DNA]</scope>
    <source>
        <strain>K12 / W3110 / ATCC 27325 / DSM 5911</strain>
    </source>
</reference>
<reference key="4">
    <citation type="journal article" date="2001" name="J. Bacteriol.">
        <title>matB, a common fimbrillin gene of Escherichia coli, expressed in a genetically conserved, virulent clonal group.</title>
        <authorList>
            <person name="Pouttu R."/>
            <person name="Westerlund-Wikstrom B."/>
            <person name="Lang H."/>
            <person name="Alsti K."/>
            <person name="Virkola R."/>
            <person name="Saarela U."/>
            <person name="Siitonen A."/>
            <person name="Kalkkinen N."/>
            <person name="Korhonen T.K."/>
        </authorList>
    </citation>
    <scope>LACK OF EXPRESSION</scope>
    <source>
        <strain>K12</strain>
    </source>
</reference>
<reference key="5">
    <citation type="journal article" date="2010" name="Microbiology">
        <title>Mat fimbriae promote biofilm formation by meningitis-associated Escherichia coli.</title>
        <authorList>
            <person name="Lehti T.A."/>
            <person name="Bauchart P."/>
            <person name="Heikkinen J."/>
            <person name="Hacker J."/>
            <person name="Korhonen T.K."/>
            <person name="Dobrindt U."/>
            <person name="Westerlund-Wikstrom B."/>
        </authorList>
    </citation>
    <scope>EXPRESSION</scope>
    <source>
        <strain>K12</strain>
    </source>
</reference>
<organism>
    <name type="scientific">Escherichia coli (strain K12)</name>
    <dbReference type="NCBI Taxonomy" id="83333"/>
    <lineage>
        <taxon>Bacteria</taxon>
        <taxon>Pseudomonadati</taxon>
        <taxon>Pseudomonadota</taxon>
        <taxon>Gammaproteobacteria</taxon>
        <taxon>Enterobacterales</taxon>
        <taxon>Enterobacteriaceae</taxon>
        <taxon>Escherichia</taxon>
    </lineage>
</organism>
<gene>
    <name type="primary">ecpA</name>
    <name type="synonym">matB</name>
    <name type="synonym">yagZ</name>
    <name type="ordered locus">b0293</name>
    <name type="ordered locus">JW0287</name>
</gene>
<sequence>MKKKVLAIALVTVFTGMGVAQAADVTAQAVATWSATAKKDTTSKLVVTPLGSLAFQYAEGIKGFNSQKGLFDVAIEGDSTATAFKLTSRLITNTLTQLDTSGSTLNVGVDYNGAAVEKTGDTVMIDTANGVLGGNLSPLANGYNASNRTTAQDGFTFSIISGTTNGTTAVTDYSTLPEGIWSGDVSVQFDATWTS</sequence>
<dbReference type="EMBL" id="U73857">
    <property type="protein sequence ID" value="AAB18022.1"/>
    <property type="molecule type" value="Genomic_DNA"/>
</dbReference>
<dbReference type="EMBL" id="U00096">
    <property type="protein sequence ID" value="AAC73396.1"/>
    <property type="molecule type" value="Genomic_DNA"/>
</dbReference>
<dbReference type="EMBL" id="AP009048">
    <property type="protein sequence ID" value="BAE76077.1"/>
    <property type="molecule type" value="Genomic_DNA"/>
</dbReference>
<dbReference type="PIR" id="E64755">
    <property type="entry name" value="E64755"/>
</dbReference>
<dbReference type="RefSeq" id="NP_414827.1">
    <property type="nucleotide sequence ID" value="NC_000913.3"/>
</dbReference>
<dbReference type="RefSeq" id="WP_000730972.1">
    <property type="nucleotide sequence ID" value="NZ_SSZK01000048.1"/>
</dbReference>
<dbReference type="SMR" id="P0AAA3"/>
<dbReference type="BioGRID" id="4259792">
    <property type="interactions" value="22"/>
</dbReference>
<dbReference type="FunCoup" id="P0AAA3">
    <property type="interactions" value="48"/>
</dbReference>
<dbReference type="STRING" id="511145.b0293"/>
<dbReference type="PaxDb" id="511145-b0293"/>
<dbReference type="EnsemblBacteria" id="AAC73396">
    <property type="protein sequence ID" value="AAC73396"/>
    <property type="gene ID" value="b0293"/>
</dbReference>
<dbReference type="GeneID" id="75204620"/>
<dbReference type="GeneID" id="948759"/>
<dbReference type="KEGG" id="ecj:JW0287"/>
<dbReference type="KEGG" id="eco:b0293"/>
<dbReference type="KEGG" id="ecoc:C3026_01430"/>
<dbReference type="KEGG" id="ecoc:C3026_24060"/>
<dbReference type="PATRIC" id="fig|1411691.4.peg.1985"/>
<dbReference type="EchoBASE" id="EB3335"/>
<dbReference type="eggNOG" id="ENOG502Z9JQ">
    <property type="taxonomic scope" value="Bacteria"/>
</dbReference>
<dbReference type="HOGENOM" id="CLU_120328_0_0_6"/>
<dbReference type="InParanoid" id="P0AAA3"/>
<dbReference type="OMA" id="AQDQFTF"/>
<dbReference type="OrthoDB" id="6556380at2"/>
<dbReference type="BioCyc" id="EcoCyc:G6164-MONOMER"/>
<dbReference type="PRO" id="PR:P0AAA3"/>
<dbReference type="Proteomes" id="UP000000625">
    <property type="component" value="Chromosome"/>
</dbReference>
<dbReference type="GO" id="GO:0009289">
    <property type="term" value="C:pilus"/>
    <property type="evidence" value="ECO:0007669"/>
    <property type="project" value="UniProtKB-SubCell"/>
</dbReference>
<dbReference type="Gene3D" id="2.60.40.3290">
    <property type="entry name" value="Fimbrial protein EcpA"/>
    <property type="match status" value="1"/>
</dbReference>
<dbReference type="InterPro" id="IPR016514">
    <property type="entry name" value="EcpA"/>
</dbReference>
<dbReference type="InterPro" id="IPR038478">
    <property type="entry name" value="Fimbrillin_EcpA_sf"/>
</dbReference>
<dbReference type="Pfam" id="PF16449">
    <property type="entry name" value="MatB"/>
    <property type="match status" value="1"/>
</dbReference>
<dbReference type="PIRSF" id="PIRSF007320">
    <property type="entry name" value="Fimbrillin_MatB"/>
    <property type="match status" value="1"/>
</dbReference>
<accession>P0AAA3</accession>
<accession>P77264</accession>
<accession>Q2MCC9</accession>